<gene>
    <name evidence="1" type="primary">psaC</name>
</gene>
<sequence>MSHSVKIYDTCIGCTQCVRACPTDVLEMIPWDGCKAKQIASAPRTEDCVGCKRCESACPTDFLSVRVYLSHETTRSMGLAY</sequence>
<feature type="chain" id="PRO_0000292114" description="Photosystem I iron-sulfur center">
    <location>
        <begin position="1"/>
        <end position="81"/>
    </location>
</feature>
<feature type="domain" description="4Fe-4S ferredoxin-type 1" evidence="1">
    <location>
        <begin position="2"/>
        <end position="31"/>
    </location>
</feature>
<feature type="domain" description="4Fe-4S ferredoxin-type 2" evidence="1">
    <location>
        <begin position="39"/>
        <end position="68"/>
    </location>
</feature>
<feature type="binding site" evidence="1">
    <location>
        <position position="11"/>
    </location>
    <ligand>
        <name>[4Fe-4S] cluster</name>
        <dbReference type="ChEBI" id="CHEBI:49883"/>
        <label>1</label>
    </ligand>
</feature>
<feature type="binding site" evidence="1">
    <location>
        <position position="14"/>
    </location>
    <ligand>
        <name>[4Fe-4S] cluster</name>
        <dbReference type="ChEBI" id="CHEBI:49883"/>
        <label>1</label>
    </ligand>
</feature>
<feature type="binding site" evidence="1">
    <location>
        <position position="17"/>
    </location>
    <ligand>
        <name>[4Fe-4S] cluster</name>
        <dbReference type="ChEBI" id="CHEBI:49883"/>
        <label>1</label>
    </ligand>
</feature>
<feature type="binding site" evidence="1">
    <location>
        <position position="21"/>
    </location>
    <ligand>
        <name>[4Fe-4S] cluster</name>
        <dbReference type="ChEBI" id="CHEBI:49883"/>
        <label>2</label>
    </ligand>
</feature>
<feature type="binding site" evidence="1">
    <location>
        <position position="48"/>
    </location>
    <ligand>
        <name>[4Fe-4S] cluster</name>
        <dbReference type="ChEBI" id="CHEBI:49883"/>
        <label>2</label>
    </ligand>
</feature>
<feature type="binding site" evidence="1">
    <location>
        <position position="51"/>
    </location>
    <ligand>
        <name>[4Fe-4S] cluster</name>
        <dbReference type="ChEBI" id="CHEBI:49883"/>
        <label>2</label>
    </ligand>
</feature>
<feature type="binding site" evidence="1">
    <location>
        <position position="54"/>
    </location>
    <ligand>
        <name>[4Fe-4S] cluster</name>
        <dbReference type="ChEBI" id="CHEBI:49883"/>
        <label>2</label>
    </ligand>
</feature>
<feature type="binding site" evidence="1">
    <location>
        <position position="58"/>
    </location>
    <ligand>
        <name>[4Fe-4S] cluster</name>
        <dbReference type="ChEBI" id="CHEBI:49883"/>
        <label>1</label>
    </ligand>
</feature>
<name>PSAC_ARAHI</name>
<proteinExistence type="inferred from homology"/>
<reference key="1">
    <citation type="submission" date="2007-03" db="EMBL/GenBank/DDBJ databases">
        <title>Sequencing analysis of Arabis hirsuta chloroplast DNA.</title>
        <authorList>
            <person name="Hosouchi T."/>
            <person name="Tsuruoka H."/>
            <person name="Kotani H."/>
        </authorList>
    </citation>
    <scope>NUCLEOTIDE SEQUENCE [LARGE SCALE GENOMIC DNA]</scope>
</reference>
<evidence type="ECO:0000255" key="1">
    <source>
        <dbReference type="HAMAP-Rule" id="MF_01303"/>
    </source>
</evidence>
<organism>
    <name type="scientific">Arabis hirsuta</name>
    <name type="common">Hairy rock-cress</name>
    <name type="synonym">Turritis hirsuta</name>
    <dbReference type="NCBI Taxonomy" id="78191"/>
    <lineage>
        <taxon>Eukaryota</taxon>
        <taxon>Viridiplantae</taxon>
        <taxon>Streptophyta</taxon>
        <taxon>Embryophyta</taxon>
        <taxon>Tracheophyta</taxon>
        <taxon>Spermatophyta</taxon>
        <taxon>Magnoliopsida</taxon>
        <taxon>eudicotyledons</taxon>
        <taxon>Gunneridae</taxon>
        <taxon>Pentapetalae</taxon>
        <taxon>rosids</taxon>
        <taxon>malvids</taxon>
        <taxon>Brassicales</taxon>
        <taxon>Brassicaceae</taxon>
        <taxon>Arabideae</taxon>
        <taxon>Arabis</taxon>
    </lineage>
</organism>
<protein>
    <recommendedName>
        <fullName evidence="1">Photosystem I iron-sulfur center</fullName>
        <ecNumber evidence="1">1.97.1.12</ecNumber>
    </recommendedName>
    <alternativeName>
        <fullName evidence="1">9 kDa polypeptide</fullName>
    </alternativeName>
    <alternativeName>
        <fullName evidence="1">PSI-C</fullName>
    </alternativeName>
    <alternativeName>
        <fullName evidence="1">Photosystem I subunit VII</fullName>
    </alternativeName>
    <alternativeName>
        <fullName evidence="1">PsaC</fullName>
    </alternativeName>
</protein>
<comment type="function">
    <text evidence="1">Apoprotein for the two 4Fe-4S centers FA and FB of photosystem I (PSI); essential for photochemical activity. FB is the terminal electron acceptor of PSI, donating electrons to ferredoxin. The C-terminus interacts with PsaA/B/D and helps assemble the protein into the PSI complex. Required for binding of PsaD and PsaE to PSI. PSI is a plastocyanin-ferredoxin oxidoreductase, converting photonic excitation into a charge separation, which transfers an electron from the donor P700 chlorophyll pair to the spectroscopically characterized acceptors A0, A1, FX, FA and FB in turn.</text>
</comment>
<comment type="catalytic activity">
    <reaction evidence="1">
        <text>reduced [plastocyanin] + hnu + oxidized [2Fe-2S]-[ferredoxin] = oxidized [plastocyanin] + reduced [2Fe-2S]-[ferredoxin]</text>
        <dbReference type="Rhea" id="RHEA:30407"/>
        <dbReference type="Rhea" id="RHEA-COMP:10000"/>
        <dbReference type="Rhea" id="RHEA-COMP:10001"/>
        <dbReference type="Rhea" id="RHEA-COMP:10039"/>
        <dbReference type="Rhea" id="RHEA-COMP:10040"/>
        <dbReference type="ChEBI" id="CHEBI:29036"/>
        <dbReference type="ChEBI" id="CHEBI:30212"/>
        <dbReference type="ChEBI" id="CHEBI:33737"/>
        <dbReference type="ChEBI" id="CHEBI:33738"/>
        <dbReference type="ChEBI" id="CHEBI:49552"/>
        <dbReference type="EC" id="1.97.1.12"/>
    </reaction>
</comment>
<comment type="cofactor">
    <cofactor evidence="1">
        <name>[4Fe-4S] cluster</name>
        <dbReference type="ChEBI" id="CHEBI:49883"/>
    </cofactor>
    <text evidence="1">Binds 2 [4Fe-4S] clusters. Cluster 2 is most probably the spectroscopically characterized electron acceptor FA and cluster 1 is most probably FB.</text>
</comment>
<comment type="subunit">
    <text evidence="1">The eukaryotic PSI reaction center is composed of at least 11 subunits.</text>
</comment>
<comment type="subcellular location">
    <subcellularLocation>
        <location evidence="1">Plastid</location>
        <location evidence="1">Chloroplast thylakoid membrane</location>
        <topology evidence="1">Peripheral membrane protein</topology>
        <orientation evidence="1">Stromal side</orientation>
    </subcellularLocation>
</comment>
<keyword id="KW-0004">4Fe-4S</keyword>
<keyword id="KW-0150">Chloroplast</keyword>
<keyword id="KW-0249">Electron transport</keyword>
<keyword id="KW-0408">Iron</keyword>
<keyword id="KW-0411">Iron-sulfur</keyword>
<keyword id="KW-0472">Membrane</keyword>
<keyword id="KW-0479">Metal-binding</keyword>
<keyword id="KW-0560">Oxidoreductase</keyword>
<keyword id="KW-0602">Photosynthesis</keyword>
<keyword id="KW-0603">Photosystem I</keyword>
<keyword id="KW-0934">Plastid</keyword>
<keyword id="KW-0677">Repeat</keyword>
<keyword id="KW-0793">Thylakoid</keyword>
<keyword id="KW-0813">Transport</keyword>
<accession>A4QK71</accession>
<dbReference type="EC" id="1.97.1.12" evidence="1"/>
<dbReference type="EMBL" id="AP009369">
    <property type="protein sequence ID" value="BAF50076.1"/>
    <property type="molecule type" value="Genomic_DNA"/>
</dbReference>
<dbReference type="RefSeq" id="YP_001123251.1">
    <property type="nucleotide sequence ID" value="NC_009268.1"/>
</dbReference>
<dbReference type="SMR" id="A4QK71"/>
<dbReference type="GeneID" id="4962498"/>
<dbReference type="GO" id="GO:0009535">
    <property type="term" value="C:chloroplast thylakoid membrane"/>
    <property type="evidence" value="ECO:0007669"/>
    <property type="project" value="UniProtKB-SubCell"/>
</dbReference>
<dbReference type="GO" id="GO:0009522">
    <property type="term" value="C:photosystem I"/>
    <property type="evidence" value="ECO:0007669"/>
    <property type="project" value="UniProtKB-KW"/>
</dbReference>
<dbReference type="GO" id="GO:0051539">
    <property type="term" value="F:4 iron, 4 sulfur cluster binding"/>
    <property type="evidence" value="ECO:0007669"/>
    <property type="project" value="UniProtKB-KW"/>
</dbReference>
<dbReference type="GO" id="GO:0009055">
    <property type="term" value="F:electron transfer activity"/>
    <property type="evidence" value="ECO:0007669"/>
    <property type="project" value="UniProtKB-UniRule"/>
</dbReference>
<dbReference type="GO" id="GO:0046872">
    <property type="term" value="F:metal ion binding"/>
    <property type="evidence" value="ECO:0007669"/>
    <property type="project" value="UniProtKB-KW"/>
</dbReference>
<dbReference type="GO" id="GO:0016491">
    <property type="term" value="F:oxidoreductase activity"/>
    <property type="evidence" value="ECO:0007669"/>
    <property type="project" value="UniProtKB-KW"/>
</dbReference>
<dbReference type="GO" id="GO:0009773">
    <property type="term" value="P:photosynthetic electron transport in photosystem I"/>
    <property type="evidence" value="ECO:0007669"/>
    <property type="project" value="InterPro"/>
</dbReference>
<dbReference type="FunFam" id="3.30.70.20:FF:000001">
    <property type="entry name" value="Photosystem I iron-sulfur center"/>
    <property type="match status" value="1"/>
</dbReference>
<dbReference type="Gene3D" id="3.30.70.20">
    <property type="match status" value="1"/>
</dbReference>
<dbReference type="HAMAP" id="MF_01303">
    <property type="entry name" value="PSI_PsaC"/>
    <property type="match status" value="1"/>
</dbReference>
<dbReference type="InterPro" id="IPR017896">
    <property type="entry name" value="4Fe4S_Fe-S-bd"/>
</dbReference>
<dbReference type="InterPro" id="IPR017900">
    <property type="entry name" value="4Fe4S_Fe_S_CS"/>
</dbReference>
<dbReference type="InterPro" id="IPR050157">
    <property type="entry name" value="PSI_iron-sulfur_center"/>
</dbReference>
<dbReference type="InterPro" id="IPR017491">
    <property type="entry name" value="PSI_PsaC"/>
</dbReference>
<dbReference type="NCBIfam" id="TIGR03048">
    <property type="entry name" value="PS_I_psaC"/>
    <property type="match status" value="1"/>
</dbReference>
<dbReference type="PANTHER" id="PTHR24960:SF79">
    <property type="entry name" value="PHOTOSYSTEM I IRON-SULFUR CENTER"/>
    <property type="match status" value="1"/>
</dbReference>
<dbReference type="PANTHER" id="PTHR24960">
    <property type="entry name" value="PHOTOSYSTEM I IRON-SULFUR CENTER-RELATED"/>
    <property type="match status" value="1"/>
</dbReference>
<dbReference type="Pfam" id="PF12838">
    <property type="entry name" value="Fer4_7"/>
    <property type="match status" value="1"/>
</dbReference>
<dbReference type="SUPFAM" id="SSF54862">
    <property type="entry name" value="4Fe-4S ferredoxins"/>
    <property type="match status" value="1"/>
</dbReference>
<dbReference type="PROSITE" id="PS00198">
    <property type="entry name" value="4FE4S_FER_1"/>
    <property type="match status" value="2"/>
</dbReference>
<dbReference type="PROSITE" id="PS51379">
    <property type="entry name" value="4FE4S_FER_2"/>
    <property type="match status" value="2"/>
</dbReference>
<geneLocation type="chloroplast"/>